<dbReference type="EMBL" id="D00201">
    <property type="protein sequence ID" value="BAA00138.1"/>
    <property type="molecule type" value="Genomic_DNA"/>
</dbReference>
<dbReference type="RefSeq" id="NP_040774.1">
    <property type="nucleotide sequence ID" value="NC_001439.1"/>
</dbReference>
<dbReference type="GeneID" id="988090"/>
<dbReference type="KEGG" id="vg:988090"/>
<dbReference type="Proteomes" id="UP000008769">
    <property type="component" value="Genome"/>
</dbReference>
<dbReference type="GO" id="GO:0016032">
    <property type="term" value="P:viral process"/>
    <property type="evidence" value="ECO:0007669"/>
    <property type="project" value="InterPro"/>
</dbReference>
<dbReference type="InterPro" id="IPR000657">
    <property type="entry name" value="Gemini_AL3"/>
</dbReference>
<dbReference type="Pfam" id="PF01407">
    <property type="entry name" value="Gemini_AL3"/>
    <property type="match status" value="1"/>
</dbReference>
<dbReference type="PRINTS" id="PR00231">
    <property type="entry name" value="GEMCOATAL3"/>
</dbReference>
<evidence type="ECO:0000250" key="1"/>
<evidence type="ECO:0000305" key="2"/>
<gene>
    <name type="ORF">AC3</name>
    <name type="ORF">AL3</name>
</gene>
<organismHost>
    <name type="scientific">Macroptilium lathyroides</name>
    <dbReference type="NCBI Taxonomy" id="260885"/>
</organismHost>
<organismHost>
    <name type="scientific">Malvastrum coromandelianum</name>
    <dbReference type="NCBI Taxonomy" id="108453"/>
</organismHost>
<organismHost>
    <name type="scientific">Phaseolus lunatus</name>
    <name type="common">Lima bean</name>
    <name type="synonym">Phaseolus limensis</name>
    <dbReference type="NCBI Taxonomy" id="3884"/>
</organismHost>
<organismHost>
    <name type="scientific">Phaseolus vulgaris</name>
    <name type="common">Kidney bean</name>
    <name type="synonym">French bean</name>
    <dbReference type="NCBI Taxonomy" id="3885"/>
</organismHost>
<comment type="function">
    <text evidence="1">Increases viral DNA accumulation. Enhances infectivity and symptom expression (By similarity).</text>
</comment>
<comment type="subunit">
    <text evidence="1">Homooligomer. Interacts with the replication-associated protein (REP). Interacts with host proliferating cell nuclear antigen (PCNA). Interacts with host retinoblastoma-related protein 1 (RBR1), and may thereby deregulate the host cell cycle. Oligomerization and interaction with PCNA are necessary for optimal replication enhancement (By similarity).</text>
</comment>
<comment type="similarity">
    <text evidence="2">Belongs to the geminiviridae replication enhancer protein family.</text>
</comment>
<organism>
    <name type="scientific">Bean golden yellow mosaic virus (isolate Puerto Rico-Japan)</name>
    <name type="common">BGYMV</name>
    <dbReference type="NCBI Taxonomy" id="222449"/>
    <lineage>
        <taxon>Viruses</taxon>
        <taxon>Monodnaviria</taxon>
        <taxon>Shotokuvirae</taxon>
        <taxon>Cressdnaviricota</taxon>
        <taxon>Repensiviricetes</taxon>
        <taxon>Geplafuvirales</taxon>
        <taxon>Geminiviridae</taxon>
        <taxon>Begomovirus</taxon>
        <taxon>Bean golden yellow mosaic virus</taxon>
    </lineage>
</organism>
<name>REN_BGYMJ</name>
<proteinExistence type="inferred from homology"/>
<sequence length="132" mass="15633">MDSRTGENITAHQAENSVFIWEVPNPLYFKIMRVEDPAYTRTRIYHIQVRFNHNLRKALDLHKAFLNFQVWTTSIQASGTTYLNRFRLLVLLYLHRLGVIGINNVIRAVQFATNKSYVNTVLENHDIKYKFY</sequence>
<protein>
    <recommendedName>
        <fullName>Replication enhancer protein</fullName>
        <shortName>REn</shortName>
    </recommendedName>
    <alternativeName>
        <fullName>15.6 kDa protein</fullName>
    </alternativeName>
    <alternativeName>
        <fullName>Protein AC3</fullName>
    </alternativeName>
    <alternativeName>
        <fullName>Protein AL3</fullName>
    </alternativeName>
</protein>
<reference key="1">
    <citation type="journal article" date="1987" name="Microbiol. Immunol.">
        <title>Total nucleotide sequences of the infectious cloned DNAs of bean golden mosaic virus.</title>
        <authorList>
            <person name="Morinaga T."/>
            <person name="Ikegami M."/>
            <person name="Shimotohno K."/>
            <person name="Miura K."/>
        </authorList>
    </citation>
    <scope>NUCLEOTIDE SEQUENCE [GENOMIC DNA]</scope>
</reference>
<accession>P0CK36</accession>
<accession>P05173</accession>
<accession>Q67581</accession>
<keyword id="KW-0945">Host-virus interaction</keyword>
<keyword id="KW-1185">Reference proteome</keyword>
<feature type="chain" id="PRO_0000415530" description="Replication enhancer protein">
    <location>
        <begin position="1"/>
        <end position="132"/>
    </location>
</feature>